<organism>
    <name type="scientific">Human adenovirus F serotype 41</name>
    <name type="common">HAdV-41</name>
    <name type="synonym">Human adenovirus 41</name>
    <dbReference type="NCBI Taxonomy" id="10524"/>
    <lineage>
        <taxon>Viruses</taxon>
        <taxon>Varidnaviria</taxon>
        <taxon>Bamfordvirae</taxon>
        <taxon>Preplasmiviricota</taxon>
        <taxon>Tectiliviricetes</taxon>
        <taxon>Rowavirales</taxon>
        <taxon>Adenoviridae</taxon>
        <taxon>Mastadenovirus</taxon>
        <taxon>Human mastadenovirus F</taxon>
    </lineage>
</organism>
<sequence>METVSHLRLAFNKPGRGGDGPTFPVGGWLRAGSLEDGAAALAMISSSSSLGGLSSSSSSRLSQLSISSSSETSSAWLSSQDSSSSSHCSCSFCCFWDRRSAMACLFPLGGMFLRAARSGGGG</sequence>
<reference key="1">
    <citation type="journal article" date="1990" name="Nucleic Acids Res.">
        <title>Nucleotide sequence of the region coding for 100K and 33K proteins of human enteric adenovirus type 41 (Tak).</title>
        <authorList>
            <person name="Slemenda S.B."/>
            <person name="Pieniazek N.J."/>
            <person name="Velarde J. Jr."/>
            <person name="Pieniazek D."/>
            <person name="Luftig R.B."/>
        </authorList>
    </citation>
    <scope>NUCLEOTIDE SEQUENCE [GENOMIC DNA]</scope>
    <source>
        <strain>Tak</strain>
    </source>
</reference>
<name>YL15_ADE41</name>
<proteinExistence type="predicted"/>
<accession>P23692</accession>
<protein>
    <recommendedName>
        <fullName>Uncharacterized 12.4 kDa protein in 33 kDa protein region</fullName>
    </recommendedName>
</protein>
<organismHost>
    <name type="scientific">Homo sapiens</name>
    <name type="common">Human</name>
    <dbReference type="NCBI Taxonomy" id="9606"/>
</organismHost>
<dbReference type="EMBL" id="X52532">
    <property type="protein sequence ID" value="CAA36766.1"/>
    <property type="molecule type" value="Genomic_DNA"/>
</dbReference>
<dbReference type="PIR" id="S10213">
    <property type="entry name" value="S10213"/>
</dbReference>
<feature type="chain" id="PRO_0000221936" description="Uncharacterized 12.4 kDa protein in 33 kDa protein region">
    <location>
        <begin position="1"/>
        <end position="122"/>
    </location>
</feature>